<keyword id="KW-0963">Cytoplasm</keyword>
<keyword id="KW-0460">Magnesium</keyword>
<keyword id="KW-0479">Metal-binding</keyword>
<keyword id="KW-0548">Nucleotidyltransferase</keyword>
<keyword id="KW-0694">RNA-binding</keyword>
<keyword id="KW-0808">Transferase</keyword>
<gene>
    <name evidence="1" type="primary">pnp</name>
    <name type="ordered locus">CKR_1332</name>
</gene>
<organism>
    <name type="scientific">Clostridium kluyveri (strain NBRC 12016)</name>
    <dbReference type="NCBI Taxonomy" id="583346"/>
    <lineage>
        <taxon>Bacteria</taxon>
        <taxon>Bacillati</taxon>
        <taxon>Bacillota</taxon>
        <taxon>Clostridia</taxon>
        <taxon>Eubacteriales</taxon>
        <taxon>Clostridiaceae</taxon>
        <taxon>Clostridium</taxon>
    </lineage>
</organism>
<feature type="chain" id="PRO_0000381877" description="Polyribonucleotide nucleotidyltransferase">
    <location>
        <begin position="1"/>
        <end position="708"/>
    </location>
</feature>
<feature type="domain" description="KH" evidence="1">
    <location>
        <begin position="552"/>
        <end position="611"/>
    </location>
</feature>
<feature type="domain" description="S1 motif" evidence="1">
    <location>
        <begin position="621"/>
        <end position="689"/>
    </location>
</feature>
<feature type="region of interest" description="Disordered" evidence="2">
    <location>
        <begin position="689"/>
        <end position="708"/>
    </location>
</feature>
<feature type="binding site" evidence="1">
    <location>
        <position position="485"/>
    </location>
    <ligand>
        <name>Mg(2+)</name>
        <dbReference type="ChEBI" id="CHEBI:18420"/>
    </ligand>
</feature>
<feature type="binding site" evidence="1">
    <location>
        <position position="491"/>
    </location>
    <ligand>
        <name>Mg(2+)</name>
        <dbReference type="ChEBI" id="CHEBI:18420"/>
    </ligand>
</feature>
<sequence length="708" mass="78734">MNEVIQTTVAGRTLKVDCEKVGMLSNCGMLISYGDTVVLINANASDKPREGIDFFPLSIEYEERLYSVGKIPGGFIKREGKPSEKAILNARAIDRPLRPLFPKGYRNDVQVVCTVLSVDQDNLPNIVAMNGASLALCISSIPFITPVGSVAVGLVDGNFIINPNLEDREKSTLNLTVCATKERVMMVEAGACEVPEDIMYDAIIFGFEECKKIALFQEEVMKKYGKKKDEPDLYKVNEDLEEEVRGFAFDMIKDAMYIVDRDERNKVLKDIDEKLEEQFSEDYADNKSDIADVVYRVKKEIVRGMLLKEHRRVDGREFDEVRPISCEVGFLPRAHGTGLFTRGLTQVMTVVTLGSLGDVQILDGVGLEDSKRYMHHYNFPSYSTGEVRPLRGPGRREIGHGALAEKALEPLIPMEEQFPYTIRLVSEVLSSNGSTSQASICGSTLALLDAGVPIKRPAAGIAMGLVTSEDLSQEEILTDIQGLEDFFGDMDFKVGGTEKGITAIQFDTKIHGLSNKCIKETLEKARTARLYILEKMKQCIPEHRAEVSKYAPKTYIMSIPPDKIRDVIGSGGKVINKIIAETGVKIDIKEDGKIFVMSEDSEGAKKALKIIDDLTREILVGEIYLGKVTKITNFGAFVEIHKGKEGLVHISKLDFTRVNKVEDIVSVGDEILVKVIEIDNQGRINLSRKDAIKDSEKKEQNEKDVQKK</sequence>
<comment type="function">
    <text evidence="1">Involved in mRNA degradation. Catalyzes the phosphorolysis of single-stranded polyribonucleotides processively in the 3'- to 5'-direction.</text>
</comment>
<comment type="catalytic activity">
    <reaction evidence="1">
        <text>RNA(n+1) + phosphate = RNA(n) + a ribonucleoside 5'-diphosphate</text>
        <dbReference type="Rhea" id="RHEA:22096"/>
        <dbReference type="Rhea" id="RHEA-COMP:14527"/>
        <dbReference type="Rhea" id="RHEA-COMP:17342"/>
        <dbReference type="ChEBI" id="CHEBI:43474"/>
        <dbReference type="ChEBI" id="CHEBI:57930"/>
        <dbReference type="ChEBI" id="CHEBI:140395"/>
        <dbReference type="EC" id="2.7.7.8"/>
    </reaction>
</comment>
<comment type="cofactor">
    <cofactor evidence="1">
        <name>Mg(2+)</name>
        <dbReference type="ChEBI" id="CHEBI:18420"/>
    </cofactor>
</comment>
<comment type="subcellular location">
    <subcellularLocation>
        <location evidence="1">Cytoplasm</location>
    </subcellularLocation>
</comment>
<comment type="similarity">
    <text evidence="1">Belongs to the polyribonucleotide nucleotidyltransferase family.</text>
</comment>
<comment type="sequence caution" evidence="3">
    <conflict type="erroneous initiation">
        <sequence resource="EMBL-CDS" id="BAH06383"/>
    </conflict>
</comment>
<protein>
    <recommendedName>
        <fullName evidence="1">Polyribonucleotide nucleotidyltransferase</fullName>
        <ecNumber evidence="1">2.7.7.8</ecNumber>
    </recommendedName>
    <alternativeName>
        <fullName evidence="1">Polynucleotide phosphorylase</fullName>
        <shortName evidence="1">PNPase</shortName>
    </alternativeName>
</protein>
<reference key="1">
    <citation type="submission" date="2005-09" db="EMBL/GenBank/DDBJ databases">
        <title>Complete genome sequence of Clostridium kluyveri and comparative genomics of Clostridia species.</title>
        <authorList>
            <person name="Inui M."/>
            <person name="Nonaka H."/>
            <person name="Shinoda Y."/>
            <person name="Ikenaga Y."/>
            <person name="Abe M."/>
            <person name="Naito K."/>
            <person name="Vertes A.A."/>
            <person name="Yukawa H."/>
        </authorList>
    </citation>
    <scope>NUCLEOTIDE SEQUENCE [LARGE SCALE GENOMIC DNA]</scope>
    <source>
        <strain>NBRC 12016</strain>
    </source>
</reference>
<accession>B9E1K8</accession>
<evidence type="ECO:0000255" key="1">
    <source>
        <dbReference type="HAMAP-Rule" id="MF_01595"/>
    </source>
</evidence>
<evidence type="ECO:0000256" key="2">
    <source>
        <dbReference type="SAM" id="MobiDB-lite"/>
    </source>
</evidence>
<evidence type="ECO:0000305" key="3"/>
<proteinExistence type="inferred from homology"/>
<name>PNP_CLOK1</name>
<dbReference type="EC" id="2.7.7.8" evidence="1"/>
<dbReference type="EMBL" id="AP009049">
    <property type="protein sequence ID" value="BAH06383.1"/>
    <property type="status" value="ALT_INIT"/>
    <property type="molecule type" value="Genomic_DNA"/>
</dbReference>
<dbReference type="RefSeq" id="WP_012101826.1">
    <property type="nucleotide sequence ID" value="NC_011837.1"/>
</dbReference>
<dbReference type="SMR" id="B9E1K8"/>
<dbReference type="KEGG" id="ckr:CKR_1332"/>
<dbReference type="HOGENOM" id="CLU_004217_2_2_9"/>
<dbReference type="Proteomes" id="UP000007969">
    <property type="component" value="Chromosome"/>
</dbReference>
<dbReference type="GO" id="GO:0005829">
    <property type="term" value="C:cytosol"/>
    <property type="evidence" value="ECO:0007669"/>
    <property type="project" value="TreeGrafter"/>
</dbReference>
<dbReference type="GO" id="GO:0000175">
    <property type="term" value="F:3'-5'-RNA exonuclease activity"/>
    <property type="evidence" value="ECO:0007669"/>
    <property type="project" value="TreeGrafter"/>
</dbReference>
<dbReference type="GO" id="GO:0000287">
    <property type="term" value="F:magnesium ion binding"/>
    <property type="evidence" value="ECO:0007669"/>
    <property type="project" value="UniProtKB-UniRule"/>
</dbReference>
<dbReference type="GO" id="GO:0004654">
    <property type="term" value="F:polyribonucleotide nucleotidyltransferase activity"/>
    <property type="evidence" value="ECO:0007669"/>
    <property type="project" value="UniProtKB-UniRule"/>
</dbReference>
<dbReference type="GO" id="GO:0003723">
    <property type="term" value="F:RNA binding"/>
    <property type="evidence" value="ECO:0007669"/>
    <property type="project" value="UniProtKB-UniRule"/>
</dbReference>
<dbReference type="GO" id="GO:0006402">
    <property type="term" value="P:mRNA catabolic process"/>
    <property type="evidence" value="ECO:0007669"/>
    <property type="project" value="UniProtKB-UniRule"/>
</dbReference>
<dbReference type="GO" id="GO:0006396">
    <property type="term" value="P:RNA processing"/>
    <property type="evidence" value="ECO:0007669"/>
    <property type="project" value="InterPro"/>
</dbReference>
<dbReference type="CDD" id="cd02393">
    <property type="entry name" value="KH-I_PNPase"/>
    <property type="match status" value="1"/>
</dbReference>
<dbReference type="CDD" id="cd11363">
    <property type="entry name" value="RNase_PH_PNPase_1"/>
    <property type="match status" value="1"/>
</dbReference>
<dbReference type="CDD" id="cd11364">
    <property type="entry name" value="RNase_PH_PNPase_2"/>
    <property type="match status" value="1"/>
</dbReference>
<dbReference type="CDD" id="cd04472">
    <property type="entry name" value="S1_PNPase"/>
    <property type="match status" value="1"/>
</dbReference>
<dbReference type="FunFam" id="2.40.50.140:FF:000023">
    <property type="entry name" value="Polyribonucleotide nucleotidyltransferase"/>
    <property type="match status" value="1"/>
</dbReference>
<dbReference type="FunFam" id="3.30.1370.10:FF:000001">
    <property type="entry name" value="Polyribonucleotide nucleotidyltransferase"/>
    <property type="match status" value="1"/>
</dbReference>
<dbReference type="FunFam" id="3.30.230.70:FF:000001">
    <property type="entry name" value="Polyribonucleotide nucleotidyltransferase"/>
    <property type="match status" value="1"/>
</dbReference>
<dbReference type="FunFam" id="3.30.230.70:FF:000002">
    <property type="entry name" value="Polyribonucleotide nucleotidyltransferase"/>
    <property type="match status" value="1"/>
</dbReference>
<dbReference type="Gene3D" id="3.30.230.70">
    <property type="entry name" value="GHMP Kinase, N-terminal domain"/>
    <property type="match status" value="2"/>
</dbReference>
<dbReference type="Gene3D" id="3.30.1370.10">
    <property type="entry name" value="K Homology domain, type 1"/>
    <property type="match status" value="1"/>
</dbReference>
<dbReference type="Gene3D" id="2.40.50.140">
    <property type="entry name" value="Nucleic acid-binding proteins"/>
    <property type="match status" value="1"/>
</dbReference>
<dbReference type="HAMAP" id="MF_01595">
    <property type="entry name" value="PNPase"/>
    <property type="match status" value="1"/>
</dbReference>
<dbReference type="InterPro" id="IPR001247">
    <property type="entry name" value="ExoRNase_PH_dom1"/>
</dbReference>
<dbReference type="InterPro" id="IPR015847">
    <property type="entry name" value="ExoRNase_PH_dom2"/>
</dbReference>
<dbReference type="InterPro" id="IPR036345">
    <property type="entry name" value="ExoRNase_PH_dom2_sf"/>
</dbReference>
<dbReference type="InterPro" id="IPR004087">
    <property type="entry name" value="KH_dom"/>
</dbReference>
<dbReference type="InterPro" id="IPR004088">
    <property type="entry name" value="KH_dom_type_1"/>
</dbReference>
<dbReference type="InterPro" id="IPR036612">
    <property type="entry name" value="KH_dom_type_1_sf"/>
</dbReference>
<dbReference type="InterPro" id="IPR012340">
    <property type="entry name" value="NA-bd_OB-fold"/>
</dbReference>
<dbReference type="InterPro" id="IPR012162">
    <property type="entry name" value="PNPase"/>
</dbReference>
<dbReference type="InterPro" id="IPR027408">
    <property type="entry name" value="PNPase/RNase_PH_dom_sf"/>
</dbReference>
<dbReference type="InterPro" id="IPR015848">
    <property type="entry name" value="PNPase_PH_RNA-bd_bac/org-type"/>
</dbReference>
<dbReference type="InterPro" id="IPR036456">
    <property type="entry name" value="PNPase_PH_RNA-bd_sf"/>
</dbReference>
<dbReference type="InterPro" id="IPR020568">
    <property type="entry name" value="Ribosomal_Su5_D2-typ_SF"/>
</dbReference>
<dbReference type="InterPro" id="IPR003029">
    <property type="entry name" value="S1_domain"/>
</dbReference>
<dbReference type="NCBIfam" id="TIGR03591">
    <property type="entry name" value="polynuc_phos"/>
    <property type="match status" value="1"/>
</dbReference>
<dbReference type="NCBIfam" id="NF008805">
    <property type="entry name" value="PRK11824.1"/>
    <property type="match status" value="1"/>
</dbReference>
<dbReference type="PANTHER" id="PTHR11252">
    <property type="entry name" value="POLYRIBONUCLEOTIDE NUCLEOTIDYLTRANSFERASE"/>
    <property type="match status" value="1"/>
</dbReference>
<dbReference type="PANTHER" id="PTHR11252:SF0">
    <property type="entry name" value="POLYRIBONUCLEOTIDE NUCLEOTIDYLTRANSFERASE 1, MITOCHONDRIAL"/>
    <property type="match status" value="1"/>
</dbReference>
<dbReference type="Pfam" id="PF00013">
    <property type="entry name" value="KH_1"/>
    <property type="match status" value="1"/>
</dbReference>
<dbReference type="Pfam" id="PF03726">
    <property type="entry name" value="PNPase"/>
    <property type="match status" value="1"/>
</dbReference>
<dbReference type="Pfam" id="PF01138">
    <property type="entry name" value="RNase_PH"/>
    <property type="match status" value="2"/>
</dbReference>
<dbReference type="Pfam" id="PF03725">
    <property type="entry name" value="RNase_PH_C"/>
    <property type="match status" value="1"/>
</dbReference>
<dbReference type="Pfam" id="PF00575">
    <property type="entry name" value="S1"/>
    <property type="match status" value="1"/>
</dbReference>
<dbReference type="PIRSF" id="PIRSF005499">
    <property type="entry name" value="PNPase"/>
    <property type="match status" value="1"/>
</dbReference>
<dbReference type="SMART" id="SM00322">
    <property type="entry name" value="KH"/>
    <property type="match status" value="1"/>
</dbReference>
<dbReference type="SMART" id="SM00316">
    <property type="entry name" value="S1"/>
    <property type="match status" value="1"/>
</dbReference>
<dbReference type="SUPFAM" id="SSF54791">
    <property type="entry name" value="Eukaryotic type KH-domain (KH-domain type I)"/>
    <property type="match status" value="1"/>
</dbReference>
<dbReference type="SUPFAM" id="SSF50249">
    <property type="entry name" value="Nucleic acid-binding proteins"/>
    <property type="match status" value="1"/>
</dbReference>
<dbReference type="SUPFAM" id="SSF46915">
    <property type="entry name" value="Polynucleotide phosphorylase/guanosine pentaphosphate synthase (PNPase/GPSI), domain 3"/>
    <property type="match status" value="1"/>
</dbReference>
<dbReference type="SUPFAM" id="SSF55666">
    <property type="entry name" value="Ribonuclease PH domain 2-like"/>
    <property type="match status" value="2"/>
</dbReference>
<dbReference type="SUPFAM" id="SSF54211">
    <property type="entry name" value="Ribosomal protein S5 domain 2-like"/>
    <property type="match status" value="2"/>
</dbReference>
<dbReference type="PROSITE" id="PS50084">
    <property type="entry name" value="KH_TYPE_1"/>
    <property type="match status" value="1"/>
</dbReference>
<dbReference type="PROSITE" id="PS50126">
    <property type="entry name" value="S1"/>
    <property type="match status" value="1"/>
</dbReference>